<protein>
    <recommendedName>
        <fullName evidence="1">Large-conductance mechanosensitive channel</fullName>
    </recommendedName>
</protein>
<sequence length="139" mass="15391">MSFMREFKEFAMRGNVIDLAVGVIIGAAFGKIVDSLVKDIVMPVIGRLLGGVDFRHLYINLGDQTYETMEAAEKAGAPLVKYGQFINTTIDFLIIAFAIFVAVKAINRLKRSEPPPPPAPVEAEEVKLLREIRDTLKRG</sequence>
<feature type="chain" id="PRO_0000237968" description="Large-conductance mechanosensitive channel">
    <location>
        <begin position="1"/>
        <end position="139"/>
    </location>
</feature>
<feature type="transmembrane region" description="Helical" evidence="1">
    <location>
        <begin position="16"/>
        <end position="36"/>
    </location>
</feature>
<feature type="transmembrane region" description="Helical" evidence="1">
    <location>
        <begin position="83"/>
        <end position="103"/>
    </location>
</feature>
<proteinExistence type="inferred from homology"/>
<evidence type="ECO:0000255" key="1">
    <source>
        <dbReference type="HAMAP-Rule" id="MF_00115"/>
    </source>
</evidence>
<gene>
    <name evidence="1" type="primary">mscL</name>
    <name type="ordered locus">AZOSEA15230</name>
    <name type="ORF">ebA2712</name>
</gene>
<dbReference type="EMBL" id="CR555306">
    <property type="protein sequence ID" value="CAI07648.1"/>
    <property type="molecule type" value="Genomic_DNA"/>
</dbReference>
<dbReference type="RefSeq" id="WP_011237363.1">
    <property type="nucleotide sequence ID" value="NC_006513.1"/>
</dbReference>
<dbReference type="SMR" id="Q5P4W4"/>
<dbReference type="STRING" id="76114.ebA2712"/>
<dbReference type="KEGG" id="eba:ebA2712"/>
<dbReference type="eggNOG" id="COG1970">
    <property type="taxonomic scope" value="Bacteria"/>
</dbReference>
<dbReference type="HOGENOM" id="CLU_095787_2_3_4"/>
<dbReference type="OrthoDB" id="9810350at2"/>
<dbReference type="Proteomes" id="UP000006552">
    <property type="component" value="Chromosome"/>
</dbReference>
<dbReference type="GO" id="GO:0005886">
    <property type="term" value="C:plasma membrane"/>
    <property type="evidence" value="ECO:0007669"/>
    <property type="project" value="UniProtKB-SubCell"/>
</dbReference>
<dbReference type="GO" id="GO:0008381">
    <property type="term" value="F:mechanosensitive monoatomic ion channel activity"/>
    <property type="evidence" value="ECO:0007669"/>
    <property type="project" value="UniProtKB-UniRule"/>
</dbReference>
<dbReference type="FunFam" id="1.10.1200.120:FF:000001">
    <property type="entry name" value="Large-conductance mechanosensitive channel"/>
    <property type="match status" value="1"/>
</dbReference>
<dbReference type="Gene3D" id="1.10.1200.120">
    <property type="entry name" value="Large-conductance mechanosensitive channel, MscL, domain 1"/>
    <property type="match status" value="1"/>
</dbReference>
<dbReference type="HAMAP" id="MF_00115">
    <property type="entry name" value="MscL"/>
    <property type="match status" value="1"/>
</dbReference>
<dbReference type="InterPro" id="IPR019823">
    <property type="entry name" value="Mechanosensitive_channel_CS"/>
</dbReference>
<dbReference type="InterPro" id="IPR001185">
    <property type="entry name" value="MS_channel"/>
</dbReference>
<dbReference type="InterPro" id="IPR037673">
    <property type="entry name" value="MSC/AndL"/>
</dbReference>
<dbReference type="InterPro" id="IPR036019">
    <property type="entry name" value="MscL_channel"/>
</dbReference>
<dbReference type="NCBIfam" id="TIGR00220">
    <property type="entry name" value="mscL"/>
    <property type="match status" value="1"/>
</dbReference>
<dbReference type="NCBIfam" id="NF001843">
    <property type="entry name" value="PRK00567.1-4"/>
    <property type="match status" value="1"/>
</dbReference>
<dbReference type="NCBIfam" id="NF010557">
    <property type="entry name" value="PRK13952.1"/>
    <property type="match status" value="1"/>
</dbReference>
<dbReference type="PANTHER" id="PTHR30266:SF2">
    <property type="entry name" value="LARGE-CONDUCTANCE MECHANOSENSITIVE CHANNEL"/>
    <property type="match status" value="1"/>
</dbReference>
<dbReference type="PANTHER" id="PTHR30266">
    <property type="entry name" value="MECHANOSENSITIVE CHANNEL MSCL"/>
    <property type="match status" value="1"/>
</dbReference>
<dbReference type="Pfam" id="PF01741">
    <property type="entry name" value="MscL"/>
    <property type="match status" value="1"/>
</dbReference>
<dbReference type="PRINTS" id="PR01264">
    <property type="entry name" value="MECHCHANNEL"/>
</dbReference>
<dbReference type="SUPFAM" id="SSF81330">
    <property type="entry name" value="Gated mechanosensitive channel"/>
    <property type="match status" value="1"/>
</dbReference>
<dbReference type="PROSITE" id="PS01327">
    <property type="entry name" value="MSCL"/>
    <property type="match status" value="1"/>
</dbReference>
<name>MSCL_AROAE</name>
<accession>Q5P4W4</accession>
<organism>
    <name type="scientific">Aromatoleum aromaticum (strain DSM 19018 / LMG 30748 / EbN1)</name>
    <name type="common">Azoarcus sp. (strain EbN1)</name>
    <dbReference type="NCBI Taxonomy" id="76114"/>
    <lineage>
        <taxon>Bacteria</taxon>
        <taxon>Pseudomonadati</taxon>
        <taxon>Pseudomonadota</taxon>
        <taxon>Betaproteobacteria</taxon>
        <taxon>Rhodocyclales</taxon>
        <taxon>Rhodocyclaceae</taxon>
        <taxon>Aromatoleum</taxon>
    </lineage>
</organism>
<keyword id="KW-0997">Cell inner membrane</keyword>
<keyword id="KW-1003">Cell membrane</keyword>
<keyword id="KW-0407">Ion channel</keyword>
<keyword id="KW-0406">Ion transport</keyword>
<keyword id="KW-0472">Membrane</keyword>
<keyword id="KW-1185">Reference proteome</keyword>
<keyword id="KW-0812">Transmembrane</keyword>
<keyword id="KW-1133">Transmembrane helix</keyword>
<keyword id="KW-0813">Transport</keyword>
<comment type="function">
    <text evidence="1">Channel that opens in response to stretch forces in the membrane lipid bilayer. May participate in the regulation of osmotic pressure changes within the cell.</text>
</comment>
<comment type="subunit">
    <text evidence="1">Homopentamer.</text>
</comment>
<comment type="subcellular location">
    <subcellularLocation>
        <location evidence="1">Cell inner membrane</location>
        <topology evidence="1">Multi-pass membrane protein</topology>
    </subcellularLocation>
</comment>
<comment type="similarity">
    <text evidence="1">Belongs to the MscL family.</text>
</comment>
<reference key="1">
    <citation type="journal article" date="2005" name="Arch. Microbiol.">
        <title>The genome sequence of an anaerobic aromatic-degrading denitrifying bacterium, strain EbN1.</title>
        <authorList>
            <person name="Rabus R."/>
            <person name="Kube M."/>
            <person name="Heider J."/>
            <person name="Beck A."/>
            <person name="Heitmann K."/>
            <person name="Widdel F."/>
            <person name="Reinhardt R."/>
        </authorList>
    </citation>
    <scope>NUCLEOTIDE SEQUENCE [LARGE SCALE GENOMIC DNA]</scope>
    <source>
        <strain>DSM 19018 / LMG 30748 / EbN1</strain>
    </source>
</reference>